<reference key="1">
    <citation type="journal article" date="2006" name="PLoS Biol.">
        <title>Macronuclear genome sequence of the ciliate Tetrahymena thermophila, a model eukaryote.</title>
        <authorList>
            <person name="Eisen J.A."/>
            <person name="Coyne R.S."/>
            <person name="Wu M."/>
            <person name="Wu D."/>
            <person name="Thiagarajan M."/>
            <person name="Wortman J.R."/>
            <person name="Badger J.H."/>
            <person name="Ren Q."/>
            <person name="Amedeo P."/>
            <person name="Jones K.M."/>
            <person name="Tallon L.J."/>
            <person name="Delcher A.L."/>
            <person name="Salzberg S.L."/>
            <person name="Silva J.C."/>
            <person name="Haas B.J."/>
            <person name="Majoros W.H."/>
            <person name="Farzad M."/>
            <person name="Carlton J.M."/>
            <person name="Smith R.K. Jr."/>
            <person name="Garg J."/>
            <person name="Pearlman R.E."/>
            <person name="Karrer K.M."/>
            <person name="Sun L."/>
            <person name="Manning G."/>
            <person name="Elde N.C."/>
            <person name="Turkewitz A.P."/>
            <person name="Asai D.J."/>
            <person name="Wilkes D.E."/>
            <person name="Wang Y."/>
            <person name="Cai H."/>
            <person name="Collins K."/>
            <person name="Stewart B.A."/>
            <person name="Lee S.R."/>
            <person name="Wilamowska K."/>
            <person name="Weinberg Z."/>
            <person name="Ruzzo W.L."/>
            <person name="Wloga D."/>
            <person name="Gaertig J."/>
            <person name="Frankel J."/>
            <person name="Tsao C.-C."/>
            <person name="Gorovsky M.A."/>
            <person name="Keeling P.J."/>
            <person name="Waller R.F."/>
            <person name="Patron N.J."/>
            <person name="Cherry J.M."/>
            <person name="Stover N.A."/>
            <person name="Krieger C.J."/>
            <person name="del Toro C."/>
            <person name="Ryder H.F."/>
            <person name="Williamson S.C."/>
            <person name="Barbeau R.A."/>
            <person name="Hamilton E.P."/>
            <person name="Orias E."/>
        </authorList>
    </citation>
    <scope>NUCLEOTIDE SEQUENCE [LARGE SCALE GENOMIC DNA]</scope>
    <source>
        <strain>SB210</strain>
    </source>
</reference>
<gene>
    <name type="primary">RPL30</name>
    <name type="ORF">TTHERM_00446280A</name>
</gene>
<proteinExistence type="evidence at protein level"/>
<accession>P0DJ59</accession>
<feature type="chain" id="PRO_0000413514" description="Large ribosomal subunit protein eL30">
    <location>
        <begin position="1"/>
        <end position="104"/>
    </location>
</feature>
<sequence length="104" mass="11351">MVKKVTQDNIQSKLALVMRSGKATLGYKSTIKAIRNGTAKLVFISNNCPTVRKSEIEYYASLAQISIHHFVGSNVELGTACGKYHRCSTMAILDAGDSDILKTE</sequence>
<protein>
    <recommendedName>
        <fullName evidence="1">Large ribosomal subunit protein eL30</fullName>
    </recommendedName>
    <alternativeName>
        <fullName>60S ribosomal protein L30</fullName>
    </alternativeName>
</protein>
<evidence type="ECO:0000305" key="1"/>
<name>RL30_TETTS</name>
<comment type="similarity">
    <text evidence="1">Belongs to the eukaryotic ribosomal protein eL30 family.</text>
</comment>
<comment type="sequence caution" evidence="1">
    <conflict type="erroneous gene model prediction">
        <sequence resource="EMBL-CDS" id="EAS03145"/>
    </conflict>
    <text>Wrong choice of frame.</text>
</comment>
<keyword id="KW-0002">3D-structure</keyword>
<keyword id="KW-1185">Reference proteome</keyword>
<keyword id="KW-0687">Ribonucleoprotein</keyword>
<keyword id="KW-0689">Ribosomal protein</keyword>
<dbReference type="EMBL" id="GG662504">
    <property type="protein sequence ID" value="EAS03145.3"/>
    <property type="status" value="ALT_SEQ"/>
    <property type="molecule type" value="Genomic_DNA"/>
</dbReference>
<dbReference type="RefSeq" id="XP_001023391.3">
    <property type="nucleotide sequence ID" value="XM_001023391.3"/>
</dbReference>
<dbReference type="PDB" id="4ADX">
    <property type="method" value="EM"/>
    <property type="resolution" value="6.60 A"/>
    <property type="chains" value="6=1-104"/>
</dbReference>
<dbReference type="PDB" id="4V8P">
    <property type="method" value="X-ray"/>
    <property type="resolution" value="3.52 A"/>
    <property type="chains" value="AG/DG/FG/HG=1-104"/>
</dbReference>
<dbReference type="PDBsum" id="4ADX"/>
<dbReference type="PDBsum" id="4V8P"/>
<dbReference type="SMR" id="P0DJ59"/>
<dbReference type="FunCoup" id="P0DJ59">
    <property type="interactions" value="439"/>
</dbReference>
<dbReference type="IntAct" id="P0DJ59">
    <property type="interactions" value="1"/>
</dbReference>
<dbReference type="STRING" id="312017.P0DJ59"/>
<dbReference type="EnsemblProtists" id="EAS03145">
    <property type="protein sequence ID" value="EAS03145"/>
    <property type="gene ID" value="TTHERM_00446280"/>
</dbReference>
<dbReference type="KEGG" id="tet:TTHERM_00446280"/>
<dbReference type="eggNOG" id="KOG2988">
    <property type="taxonomic scope" value="Eukaryota"/>
</dbReference>
<dbReference type="HOGENOM" id="CLU_130502_0_1_1"/>
<dbReference type="InParanoid" id="P0DJ59"/>
<dbReference type="OMA" id="YFQGGNN"/>
<dbReference type="EvolutionaryTrace" id="P0DJ59"/>
<dbReference type="Proteomes" id="UP000009168">
    <property type="component" value="Unassembled WGS sequence"/>
</dbReference>
<dbReference type="GO" id="GO:1990904">
    <property type="term" value="C:ribonucleoprotein complex"/>
    <property type="evidence" value="ECO:0007669"/>
    <property type="project" value="UniProtKB-KW"/>
</dbReference>
<dbReference type="GO" id="GO:0005840">
    <property type="term" value="C:ribosome"/>
    <property type="evidence" value="ECO:0007669"/>
    <property type="project" value="UniProtKB-KW"/>
</dbReference>
<dbReference type="GO" id="GO:0003723">
    <property type="term" value="F:RNA binding"/>
    <property type="evidence" value="ECO:0007669"/>
    <property type="project" value="InterPro"/>
</dbReference>
<dbReference type="FunFam" id="3.30.1330.30:FF:000001">
    <property type="entry name" value="60S ribosomal protein L30"/>
    <property type="match status" value="1"/>
</dbReference>
<dbReference type="Gene3D" id="3.30.1330.30">
    <property type="match status" value="1"/>
</dbReference>
<dbReference type="InterPro" id="IPR039109">
    <property type="entry name" value="Ribosomal_eL30-like"/>
</dbReference>
<dbReference type="InterPro" id="IPR029064">
    <property type="entry name" value="Ribosomal_eL30-like_sf"/>
</dbReference>
<dbReference type="InterPro" id="IPR022991">
    <property type="entry name" value="Ribosomal_eL30_CS"/>
</dbReference>
<dbReference type="InterPro" id="IPR004038">
    <property type="entry name" value="Ribosomal_eL8/eL30/eS12/Gad45"/>
</dbReference>
<dbReference type="NCBIfam" id="NF002172">
    <property type="entry name" value="PRK01018.1"/>
    <property type="match status" value="1"/>
</dbReference>
<dbReference type="PANTHER" id="PTHR11449">
    <property type="entry name" value="RIBOSOMAL PROTEIN L30"/>
    <property type="match status" value="1"/>
</dbReference>
<dbReference type="Pfam" id="PF01248">
    <property type="entry name" value="Ribosomal_L7Ae"/>
    <property type="match status" value="1"/>
</dbReference>
<dbReference type="SUPFAM" id="SSF55315">
    <property type="entry name" value="L30e-like"/>
    <property type="match status" value="1"/>
</dbReference>
<dbReference type="PROSITE" id="PS00993">
    <property type="entry name" value="RIBOSOMAL_L30E_2"/>
    <property type="match status" value="1"/>
</dbReference>
<organism>
    <name type="scientific">Tetrahymena thermophila (strain SB210)</name>
    <dbReference type="NCBI Taxonomy" id="312017"/>
    <lineage>
        <taxon>Eukaryota</taxon>
        <taxon>Sar</taxon>
        <taxon>Alveolata</taxon>
        <taxon>Ciliophora</taxon>
        <taxon>Intramacronucleata</taxon>
        <taxon>Oligohymenophorea</taxon>
        <taxon>Hymenostomatida</taxon>
        <taxon>Tetrahymenina</taxon>
        <taxon>Tetrahymenidae</taxon>
        <taxon>Tetrahymena</taxon>
    </lineage>
</organism>